<protein>
    <recommendedName>
        <fullName evidence="1">Lysine--tRNA ligase</fullName>
        <ecNumber evidence="1">6.1.1.6</ecNumber>
    </recommendedName>
    <alternativeName>
        <fullName evidence="1">Lysyl-tRNA synthetase</fullName>
        <shortName evidence="1">LysRS</shortName>
    </alternativeName>
</protein>
<accession>A0K8P2</accession>
<name>SYK_BURCH</name>
<keyword id="KW-0030">Aminoacyl-tRNA synthetase</keyword>
<keyword id="KW-0067">ATP-binding</keyword>
<keyword id="KW-0963">Cytoplasm</keyword>
<keyword id="KW-0436">Ligase</keyword>
<keyword id="KW-0460">Magnesium</keyword>
<keyword id="KW-0479">Metal-binding</keyword>
<keyword id="KW-0547">Nucleotide-binding</keyword>
<keyword id="KW-0648">Protein biosynthesis</keyword>
<gene>
    <name evidence="1" type="primary">lysS</name>
    <name type="ordered locus">Bcen2424_2118</name>
</gene>
<feature type="chain" id="PRO_1000012849" description="Lysine--tRNA ligase">
    <location>
        <begin position="1"/>
        <end position="508"/>
    </location>
</feature>
<feature type="binding site" evidence="1">
    <location>
        <position position="418"/>
    </location>
    <ligand>
        <name>Mg(2+)</name>
        <dbReference type="ChEBI" id="CHEBI:18420"/>
        <label>1</label>
    </ligand>
</feature>
<feature type="binding site" evidence="1">
    <location>
        <position position="425"/>
    </location>
    <ligand>
        <name>Mg(2+)</name>
        <dbReference type="ChEBI" id="CHEBI:18420"/>
        <label>1</label>
    </ligand>
</feature>
<feature type="binding site" evidence="1">
    <location>
        <position position="425"/>
    </location>
    <ligand>
        <name>Mg(2+)</name>
        <dbReference type="ChEBI" id="CHEBI:18420"/>
        <label>2</label>
    </ligand>
</feature>
<proteinExistence type="inferred from homology"/>
<reference key="1">
    <citation type="submission" date="2006-08" db="EMBL/GenBank/DDBJ databases">
        <title>Complete sequence of chromosome 1 of Burkholderia cenocepacia HI2424.</title>
        <authorList>
            <person name="Copeland A."/>
            <person name="Lucas S."/>
            <person name="Lapidus A."/>
            <person name="Barry K."/>
            <person name="Detter J.C."/>
            <person name="Glavina del Rio T."/>
            <person name="Hammon N."/>
            <person name="Israni S."/>
            <person name="Pitluck S."/>
            <person name="Chain P."/>
            <person name="Malfatti S."/>
            <person name="Shin M."/>
            <person name="Vergez L."/>
            <person name="Schmutz J."/>
            <person name="Larimer F."/>
            <person name="Land M."/>
            <person name="Hauser L."/>
            <person name="Kyrpides N."/>
            <person name="Kim E."/>
            <person name="LiPuma J.J."/>
            <person name="Gonzalez C.F."/>
            <person name="Konstantinidis K."/>
            <person name="Tiedje J.M."/>
            <person name="Richardson P."/>
        </authorList>
    </citation>
    <scope>NUCLEOTIDE SEQUENCE [LARGE SCALE GENOMIC DNA]</scope>
    <source>
        <strain>HI2424</strain>
    </source>
</reference>
<comment type="catalytic activity">
    <reaction evidence="1">
        <text>tRNA(Lys) + L-lysine + ATP = L-lysyl-tRNA(Lys) + AMP + diphosphate</text>
        <dbReference type="Rhea" id="RHEA:20792"/>
        <dbReference type="Rhea" id="RHEA-COMP:9696"/>
        <dbReference type="Rhea" id="RHEA-COMP:9697"/>
        <dbReference type="ChEBI" id="CHEBI:30616"/>
        <dbReference type="ChEBI" id="CHEBI:32551"/>
        <dbReference type="ChEBI" id="CHEBI:33019"/>
        <dbReference type="ChEBI" id="CHEBI:78442"/>
        <dbReference type="ChEBI" id="CHEBI:78529"/>
        <dbReference type="ChEBI" id="CHEBI:456215"/>
        <dbReference type="EC" id="6.1.1.6"/>
    </reaction>
</comment>
<comment type="cofactor">
    <cofactor evidence="1">
        <name>Mg(2+)</name>
        <dbReference type="ChEBI" id="CHEBI:18420"/>
    </cofactor>
    <text evidence="1">Binds 3 Mg(2+) ions per subunit.</text>
</comment>
<comment type="subunit">
    <text evidence="1">Homodimer.</text>
</comment>
<comment type="subcellular location">
    <subcellularLocation>
        <location evidence="1">Cytoplasm</location>
    </subcellularLocation>
</comment>
<comment type="similarity">
    <text evidence="1">Belongs to the class-II aminoacyl-tRNA synthetase family.</text>
</comment>
<dbReference type="EC" id="6.1.1.6" evidence="1"/>
<dbReference type="EMBL" id="CP000458">
    <property type="protein sequence ID" value="ABK08869.1"/>
    <property type="molecule type" value="Genomic_DNA"/>
</dbReference>
<dbReference type="RefSeq" id="WP_006478395.1">
    <property type="nucleotide sequence ID" value="NC_008542.1"/>
</dbReference>
<dbReference type="SMR" id="A0K8P2"/>
<dbReference type="GeneID" id="83048919"/>
<dbReference type="KEGG" id="bch:Bcen2424_2118"/>
<dbReference type="HOGENOM" id="CLU_008255_6_0_4"/>
<dbReference type="GO" id="GO:0005829">
    <property type="term" value="C:cytosol"/>
    <property type="evidence" value="ECO:0007669"/>
    <property type="project" value="TreeGrafter"/>
</dbReference>
<dbReference type="GO" id="GO:0005524">
    <property type="term" value="F:ATP binding"/>
    <property type="evidence" value="ECO:0007669"/>
    <property type="project" value="UniProtKB-UniRule"/>
</dbReference>
<dbReference type="GO" id="GO:0004824">
    <property type="term" value="F:lysine-tRNA ligase activity"/>
    <property type="evidence" value="ECO:0007669"/>
    <property type="project" value="UniProtKB-UniRule"/>
</dbReference>
<dbReference type="GO" id="GO:0000287">
    <property type="term" value="F:magnesium ion binding"/>
    <property type="evidence" value="ECO:0007669"/>
    <property type="project" value="UniProtKB-UniRule"/>
</dbReference>
<dbReference type="GO" id="GO:0000049">
    <property type="term" value="F:tRNA binding"/>
    <property type="evidence" value="ECO:0007669"/>
    <property type="project" value="TreeGrafter"/>
</dbReference>
<dbReference type="GO" id="GO:0006430">
    <property type="term" value="P:lysyl-tRNA aminoacylation"/>
    <property type="evidence" value="ECO:0007669"/>
    <property type="project" value="UniProtKB-UniRule"/>
</dbReference>
<dbReference type="CDD" id="cd00775">
    <property type="entry name" value="LysRS_core"/>
    <property type="match status" value="1"/>
</dbReference>
<dbReference type="CDD" id="cd04322">
    <property type="entry name" value="LysRS_N"/>
    <property type="match status" value="1"/>
</dbReference>
<dbReference type="FunFam" id="2.40.50.140:FF:000024">
    <property type="entry name" value="Lysine--tRNA ligase"/>
    <property type="match status" value="1"/>
</dbReference>
<dbReference type="FunFam" id="3.30.930.10:FF:000001">
    <property type="entry name" value="Lysine--tRNA ligase"/>
    <property type="match status" value="1"/>
</dbReference>
<dbReference type="Gene3D" id="3.30.930.10">
    <property type="entry name" value="Bira Bifunctional Protein, Domain 2"/>
    <property type="match status" value="1"/>
</dbReference>
<dbReference type="Gene3D" id="2.40.50.140">
    <property type="entry name" value="Nucleic acid-binding proteins"/>
    <property type="match status" value="1"/>
</dbReference>
<dbReference type="HAMAP" id="MF_00252">
    <property type="entry name" value="Lys_tRNA_synth_class2"/>
    <property type="match status" value="1"/>
</dbReference>
<dbReference type="InterPro" id="IPR004364">
    <property type="entry name" value="Aa-tRNA-synt_II"/>
</dbReference>
<dbReference type="InterPro" id="IPR006195">
    <property type="entry name" value="aa-tRNA-synth_II"/>
</dbReference>
<dbReference type="InterPro" id="IPR045864">
    <property type="entry name" value="aa-tRNA-synth_II/BPL/LPL"/>
</dbReference>
<dbReference type="InterPro" id="IPR002313">
    <property type="entry name" value="Lys-tRNA-ligase_II"/>
</dbReference>
<dbReference type="InterPro" id="IPR044136">
    <property type="entry name" value="Lys-tRNA-ligase_II_N"/>
</dbReference>
<dbReference type="InterPro" id="IPR018149">
    <property type="entry name" value="Lys-tRNA-synth_II_C"/>
</dbReference>
<dbReference type="InterPro" id="IPR012340">
    <property type="entry name" value="NA-bd_OB-fold"/>
</dbReference>
<dbReference type="InterPro" id="IPR004365">
    <property type="entry name" value="NA-bd_OB_tRNA"/>
</dbReference>
<dbReference type="NCBIfam" id="TIGR00499">
    <property type="entry name" value="lysS_bact"/>
    <property type="match status" value="1"/>
</dbReference>
<dbReference type="NCBIfam" id="NF001756">
    <property type="entry name" value="PRK00484.1"/>
    <property type="match status" value="1"/>
</dbReference>
<dbReference type="PANTHER" id="PTHR42918:SF15">
    <property type="entry name" value="LYSINE--TRNA LIGASE, CHLOROPLASTIC_MITOCHONDRIAL"/>
    <property type="match status" value="1"/>
</dbReference>
<dbReference type="PANTHER" id="PTHR42918">
    <property type="entry name" value="LYSYL-TRNA SYNTHETASE"/>
    <property type="match status" value="1"/>
</dbReference>
<dbReference type="Pfam" id="PF00152">
    <property type="entry name" value="tRNA-synt_2"/>
    <property type="match status" value="1"/>
</dbReference>
<dbReference type="Pfam" id="PF01336">
    <property type="entry name" value="tRNA_anti-codon"/>
    <property type="match status" value="1"/>
</dbReference>
<dbReference type="PRINTS" id="PR00982">
    <property type="entry name" value="TRNASYNTHLYS"/>
</dbReference>
<dbReference type="SUPFAM" id="SSF55681">
    <property type="entry name" value="Class II aaRS and biotin synthetases"/>
    <property type="match status" value="1"/>
</dbReference>
<dbReference type="SUPFAM" id="SSF50249">
    <property type="entry name" value="Nucleic acid-binding proteins"/>
    <property type="match status" value="1"/>
</dbReference>
<dbReference type="PROSITE" id="PS50862">
    <property type="entry name" value="AA_TRNA_LIGASE_II"/>
    <property type="match status" value="1"/>
</dbReference>
<sequence length="508" mass="57557">MTEPTQTQPAVTADENQIIAERREKLRALREQGVAYPNDFRPEHHAADLQAKFADSDKAALEANPVEVSVAGRMMLKRVMGKASFATVQDGSGQIQFFVTPNDVGADTYDAFKKWDLGDIVAARGVLFRTNKGELSVQCKELRLLSKALRPLPDKFHGLSDQEMRYRQRYVDLIVTPETRDTFRARTKTIASIRKFMDNADFMEVETPMLHPIPGGAAAKPFVTHHNALDMQMFLRIAPELYLKRLIVGGFERVFEINRNFRNEGVSPRHNPEFTMMEFYAAYTDYRWLMDFTEQLIRQAAIDALGTATIQYQGRELDLAKPFHRLTITQAIQKYAPDYTDGQLSDDAFLRTELKRFGVDVSQPAFLNAGIGALQLALFEETAEAQLWEPTFIIDYPVEVSPLARASDTVPGITERFELFMTGREIANGFSELNDPEDQAARFKKQVEQKDAGDEEAMFFDADYIRALEYGMPPTGGCGIGIDRLVMLLTDSPTIRDVLLFPHLRRED</sequence>
<evidence type="ECO:0000255" key="1">
    <source>
        <dbReference type="HAMAP-Rule" id="MF_00252"/>
    </source>
</evidence>
<organism>
    <name type="scientific">Burkholderia cenocepacia (strain HI2424)</name>
    <dbReference type="NCBI Taxonomy" id="331272"/>
    <lineage>
        <taxon>Bacteria</taxon>
        <taxon>Pseudomonadati</taxon>
        <taxon>Pseudomonadota</taxon>
        <taxon>Betaproteobacteria</taxon>
        <taxon>Burkholderiales</taxon>
        <taxon>Burkholderiaceae</taxon>
        <taxon>Burkholderia</taxon>
        <taxon>Burkholderia cepacia complex</taxon>
    </lineage>
</organism>